<proteinExistence type="evidence at transcript level"/>
<evidence type="ECO:0000255" key="1">
    <source>
        <dbReference type="PROSITE-ProRule" id="PRU00108"/>
    </source>
</evidence>
<evidence type="ECO:0000256" key="2">
    <source>
        <dbReference type="SAM" id="MobiDB-lite"/>
    </source>
</evidence>
<evidence type="ECO:0000305" key="3"/>
<sequence>MSSKFIIDSMLPKYHQQFHHQQLFQSATTEAPAAYSSSSPSGSSPQHSSSSASTSPAARMYPYVSAAHHHHQAAAAAFGAAASGSMVPSFSSTASSALAAAVDAATDKSCRYTAGLAANVTPADSMVNYTLGQHHHNGAAVSAASSVSAASASMAVAAQFYHQAASAVVDPLNSCSQPAAPGGQPIPDIPRYPWMSITDWMSPFDRVVCGPNGCPRRRGRQTYTRFQTLELEKEFHFNHYLTRRRRIEIAHALCLTERQIKIWFQNRRMKLKKELRAVKEINEQARREREEQERHKQQQQEKQQKIEQQTHSSIHQHHHDPMKMSLDKSGGSDLLKAVSKVPT</sequence>
<keyword id="KW-0025">Alternative splicing</keyword>
<keyword id="KW-0217">Developmental protein</keyword>
<keyword id="KW-0238">DNA-binding</keyword>
<keyword id="KW-0371">Homeobox</keyword>
<keyword id="KW-0539">Nucleus</keyword>
<reference key="1">
    <citation type="submission" date="1997-08" db="EMBL/GenBank/DDBJ databases">
        <authorList>
            <person name="Brown S."/>
        </authorList>
    </citation>
    <scope>NUCLEOTIDE SEQUENCE [GENOMIC DNA / MRNA]</scope>
    <source>
        <strain>Georgia</strain>
    </source>
</reference>
<reference key="2">
    <citation type="journal article" date="1993" name="Development">
        <title>The Tribolium homeotic gene Abdominal is homologous to abdominal-A of the Drosophila bithorax complex.</title>
        <authorList>
            <person name="Stuart J.J."/>
            <person name="Brown S.J."/>
            <person name="Beeman R.W."/>
            <person name="Denell R.E."/>
        </authorList>
    </citation>
    <scope>NUCLEOTIDE SEQUENCE [GENOMIC DNA] OF 210-343</scope>
</reference>
<accession>Q07961</accession>
<feature type="chain" id="PRO_0000200254" description="Homeobox protein abdominal-A homolog">
    <location>
        <begin position="1"/>
        <end position="343"/>
    </location>
</feature>
<feature type="DNA-binding region" description="Homeobox" evidence="1">
    <location>
        <begin position="216"/>
        <end position="275"/>
    </location>
</feature>
<feature type="region of interest" description="Disordered" evidence="2">
    <location>
        <begin position="29"/>
        <end position="54"/>
    </location>
</feature>
<feature type="region of interest" description="Disordered" evidence="2">
    <location>
        <begin position="286"/>
        <end position="343"/>
    </location>
</feature>
<feature type="compositionally biased region" description="Basic and acidic residues" evidence="2">
    <location>
        <begin position="286"/>
        <end position="305"/>
    </location>
</feature>
<feature type="splice variant" id="VSP_002395" description="In isoform Abd-AI." evidence="3">
    <location>
        <begin position="1"/>
        <end position="59"/>
    </location>
</feature>
<organism>
    <name type="scientific">Tribolium castaneum</name>
    <name type="common">Red flour beetle</name>
    <dbReference type="NCBI Taxonomy" id="7070"/>
    <lineage>
        <taxon>Eukaryota</taxon>
        <taxon>Metazoa</taxon>
        <taxon>Ecdysozoa</taxon>
        <taxon>Arthropoda</taxon>
        <taxon>Hexapoda</taxon>
        <taxon>Insecta</taxon>
        <taxon>Pterygota</taxon>
        <taxon>Neoptera</taxon>
        <taxon>Endopterygota</taxon>
        <taxon>Coleoptera</taxon>
        <taxon>Polyphaga</taxon>
        <taxon>Cucujiformia</taxon>
        <taxon>Tenebrionidae</taxon>
        <taxon>Tenebrionidae incertae sedis</taxon>
        <taxon>Tribolium</taxon>
    </lineage>
</organism>
<name>ABDA_TRICA</name>
<comment type="function">
    <text>Sequence-specific transcription factor which is part of a developmental regulatory system that provides cells with specific positional identities on the anterior-posterior axis.</text>
</comment>
<comment type="subcellular location">
    <subcellularLocation>
        <location evidence="3">Nucleus</location>
    </subcellularLocation>
</comment>
<comment type="alternative products">
    <event type="alternative splicing"/>
    <isoform>
        <id>Q07961-1</id>
        <name>Abd-AII</name>
        <sequence type="displayed"/>
    </isoform>
    <isoform>
        <id>Q07961-2</id>
        <name>Abd-AI</name>
        <sequence type="described" ref="VSP_002395"/>
    </isoform>
</comment>
<comment type="similarity">
    <text evidence="3">Belongs to the Antp homeobox family.</text>
</comment>
<gene>
    <name type="primary">ABD-A</name>
</gene>
<dbReference type="EMBL" id="AF017415">
    <property type="protein sequence ID" value="AAB70262.1"/>
    <property type="molecule type" value="mRNA"/>
</dbReference>
<dbReference type="EMBL" id="AF017415">
    <property type="protein sequence ID" value="AAB70263.1"/>
    <property type="molecule type" value="mRNA"/>
</dbReference>
<dbReference type="EMBL" id="AF017414">
    <property type="protein sequence ID" value="AAB70261.1"/>
    <property type="molecule type" value="Genomic_DNA"/>
</dbReference>
<dbReference type="EMBL" id="AF017414">
    <property type="protein sequence ID" value="AAB70260.1"/>
    <property type="molecule type" value="Genomic_DNA"/>
</dbReference>
<dbReference type="EMBL" id="X72339">
    <property type="protein sequence ID" value="CAA51066.1"/>
    <property type="molecule type" value="Genomic_DNA"/>
</dbReference>
<dbReference type="RefSeq" id="NP_001034518.1">
    <molecule id="Q07961-1"/>
    <property type="nucleotide sequence ID" value="NM_001039429.1"/>
</dbReference>
<dbReference type="RefSeq" id="XP_015839429.1">
    <property type="nucleotide sequence ID" value="XM_015983943.1"/>
</dbReference>
<dbReference type="SMR" id="Q07961"/>
<dbReference type="EnsemblMetazoa" id="TC000894_001">
    <molecule id="Q07961-1"/>
    <property type="protein sequence ID" value="TC000894_001"/>
    <property type="gene ID" value="TC000894"/>
</dbReference>
<dbReference type="GeneID" id="641595"/>
<dbReference type="KEGG" id="tca:641595"/>
<dbReference type="CTD" id="42037"/>
<dbReference type="eggNOG" id="KOG0489">
    <property type="taxonomic scope" value="Eukaryota"/>
</dbReference>
<dbReference type="HOGENOM" id="CLU_750519_0_0_1"/>
<dbReference type="OMA" id="GKAINRE"/>
<dbReference type="OrthoDB" id="6159439at2759"/>
<dbReference type="PhylomeDB" id="Q07961"/>
<dbReference type="GO" id="GO:0005634">
    <property type="term" value="C:nucleus"/>
    <property type="evidence" value="ECO:0007669"/>
    <property type="project" value="UniProtKB-SubCell"/>
</dbReference>
<dbReference type="GO" id="GO:0003677">
    <property type="term" value="F:DNA binding"/>
    <property type="evidence" value="ECO:0007669"/>
    <property type="project" value="UniProtKB-KW"/>
</dbReference>
<dbReference type="GO" id="GO:0000981">
    <property type="term" value="F:DNA-binding transcription factor activity, RNA polymerase II-specific"/>
    <property type="evidence" value="ECO:0007669"/>
    <property type="project" value="InterPro"/>
</dbReference>
<dbReference type="CDD" id="cd00086">
    <property type="entry name" value="homeodomain"/>
    <property type="match status" value="1"/>
</dbReference>
<dbReference type="FunFam" id="1.10.10.60:FF:000317">
    <property type="entry name" value="homeobox protein abdominal-A"/>
    <property type="match status" value="1"/>
</dbReference>
<dbReference type="Gene3D" id="1.10.10.60">
    <property type="entry name" value="Homeodomain-like"/>
    <property type="match status" value="1"/>
</dbReference>
<dbReference type="InterPro" id="IPR022132">
    <property type="entry name" value="Abdominal-A"/>
</dbReference>
<dbReference type="InterPro" id="IPR050296">
    <property type="entry name" value="Antp_homeobox"/>
</dbReference>
<dbReference type="InterPro" id="IPR001356">
    <property type="entry name" value="HD"/>
</dbReference>
<dbReference type="InterPro" id="IPR020479">
    <property type="entry name" value="HD_metazoa"/>
</dbReference>
<dbReference type="InterPro" id="IPR017970">
    <property type="entry name" value="Homeobox_CS"/>
</dbReference>
<dbReference type="InterPro" id="IPR009057">
    <property type="entry name" value="Homeodomain-like_sf"/>
</dbReference>
<dbReference type="PANTHER" id="PTHR45659:SF4">
    <property type="entry name" value="HOMEOBOX PROTEIN ABDOMINAL-A"/>
    <property type="match status" value="1"/>
</dbReference>
<dbReference type="PANTHER" id="PTHR45659">
    <property type="entry name" value="HOMEOBOX PROTEIN HOX"/>
    <property type="match status" value="1"/>
</dbReference>
<dbReference type="Pfam" id="PF12407">
    <property type="entry name" value="Abdominal-A"/>
    <property type="match status" value="1"/>
</dbReference>
<dbReference type="Pfam" id="PF00046">
    <property type="entry name" value="Homeodomain"/>
    <property type="match status" value="1"/>
</dbReference>
<dbReference type="PRINTS" id="PR00024">
    <property type="entry name" value="HOMEOBOX"/>
</dbReference>
<dbReference type="SMART" id="SM00389">
    <property type="entry name" value="HOX"/>
    <property type="match status" value="1"/>
</dbReference>
<dbReference type="SUPFAM" id="SSF46689">
    <property type="entry name" value="Homeodomain-like"/>
    <property type="match status" value="1"/>
</dbReference>
<dbReference type="PROSITE" id="PS00027">
    <property type="entry name" value="HOMEOBOX_1"/>
    <property type="match status" value="1"/>
</dbReference>
<dbReference type="PROSITE" id="PS50071">
    <property type="entry name" value="HOMEOBOX_2"/>
    <property type="match status" value="1"/>
</dbReference>
<protein>
    <recommendedName>
        <fullName>Homeobox protein abdominal-A homolog</fullName>
    </recommendedName>
</protein>